<evidence type="ECO:0000250" key="1"/>
<evidence type="ECO:0000250" key="2">
    <source>
        <dbReference type="UniProtKB" id="P28495"/>
    </source>
</evidence>
<evidence type="ECO:0000250" key="3">
    <source>
        <dbReference type="UniProtKB" id="Q10434"/>
    </source>
</evidence>
<evidence type="ECO:0000305" key="4"/>
<dbReference type="EMBL" id="BA000051">
    <property type="protein sequence ID" value="BAE58866.1"/>
    <property type="molecule type" value="Genomic_DNA"/>
</dbReference>
<dbReference type="RefSeq" id="XP_001820868.1">
    <property type="nucleotide sequence ID" value="XM_001820816.2"/>
</dbReference>
<dbReference type="SMR" id="Q2UHU9"/>
<dbReference type="STRING" id="510516.Q2UHU9"/>
<dbReference type="EnsemblFungi" id="BAE58866">
    <property type="protein sequence ID" value="BAE58866"/>
    <property type="gene ID" value="AO090023000303"/>
</dbReference>
<dbReference type="GeneID" id="5992870"/>
<dbReference type="KEGG" id="aor:AO090023000303"/>
<dbReference type="VEuPathDB" id="FungiDB:AO090023000303"/>
<dbReference type="HOGENOM" id="CLU_045161_0_0_1"/>
<dbReference type="OMA" id="QEHFPNA"/>
<dbReference type="OrthoDB" id="37092at5052"/>
<dbReference type="Proteomes" id="UP000006564">
    <property type="component" value="Chromosome 3"/>
</dbReference>
<dbReference type="GO" id="GO:0030479">
    <property type="term" value="C:actin cortical patch"/>
    <property type="evidence" value="ECO:0007669"/>
    <property type="project" value="UniProtKB-SubCell"/>
</dbReference>
<dbReference type="GO" id="GO:0005934">
    <property type="term" value="C:cellular bud tip"/>
    <property type="evidence" value="ECO:0007669"/>
    <property type="project" value="EnsemblFungi"/>
</dbReference>
<dbReference type="GO" id="GO:0008290">
    <property type="term" value="C:F-actin capping protein complex"/>
    <property type="evidence" value="ECO:0007669"/>
    <property type="project" value="EnsemblFungi"/>
</dbReference>
<dbReference type="GO" id="GO:0000131">
    <property type="term" value="C:incipient cellular bud site"/>
    <property type="evidence" value="ECO:0007669"/>
    <property type="project" value="EnsemblFungi"/>
</dbReference>
<dbReference type="GO" id="GO:0110085">
    <property type="term" value="C:mitotic actomyosin contractile ring"/>
    <property type="evidence" value="ECO:0007669"/>
    <property type="project" value="EnsemblFungi"/>
</dbReference>
<dbReference type="GO" id="GO:0051015">
    <property type="term" value="F:actin filament binding"/>
    <property type="evidence" value="ECO:0007669"/>
    <property type="project" value="EnsemblFungi"/>
</dbReference>
<dbReference type="GO" id="GO:0044396">
    <property type="term" value="P:actin cortical patch organization"/>
    <property type="evidence" value="ECO:0007669"/>
    <property type="project" value="EnsemblFungi"/>
</dbReference>
<dbReference type="GO" id="GO:0051016">
    <property type="term" value="P:barbed-end actin filament capping"/>
    <property type="evidence" value="ECO:0007669"/>
    <property type="project" value="EnsemblFungi"/>
</dbReference>
<dbReference type="GO" id="GO:1904600">
    <property type="term" value="P:mating projection actin fusion focus assembly"/>
    <property type="evidence" value="ECO:0007669"/>
    <property type="project" value="EnsemblFungi"/>
</dbReference>
<dbReference type="GO" id="GO:1903475">
    <property type="term" value="P:mitotic actomyosin contractile ring assembly"/>
    <property type="evidence" value="ECO:0007669"/>
    <property type="project" value="EnsemblFungi"/>
</dbReference>
<dbReference type="GO" id="GO:1902404">
    <property type="term" value="P:mitotic actomyosin contractile ring contraction"/>
    <property type="evidence" value="ECO:0007669"/>
    <property type="project" value="EnsemblFungi"/>
</dbReference>
<dbReference type="FunFam" id="3.30.1140.60:FF:000004">
    <property type="entry name" value="F-actin-capping protein subunit alpha"/>
    <property type="match status" value="1"/>
</dbReference>
<dbReference type="FunFam" id="3.90.1150.210:FF:000003">
    <property type="entry name" value="F-actin-capping protein subunit alpha"/>
    <property type="match status" value="1"/>
</dbReference>
<dbReference type="Gene3D" id="3.30.1140.60">
    <property type="entry name" value="F-actin capping protein, alpha subunit"/>
    <property type="match status" value="1"/>
</dbReference>
<dbReference type="Gene3D" id="3.90.1150.210">
    <property type="entry name" value="F-actin capping protein, beta subunit"/>
    <property type="match status" value="1"/>
</dbReference>
<dbReference type="InterPro" id="IPR002189">
    <property type="entry name" value="CapZ_alpha"/>
</dbReference>
<dbReference type="InterPro" id="IPR037282">
    <property type="entry name" value="CapZ_alpha/beta"/>
</dbReference>
<dbReference type="InterPro" id="IPR042276">
    <property type="entry name" value="CapZ_alpha/beta_2"/>
</dbReference>
<dbReference type="InterPro" id="IPR042489">
    <property type="entry name" value="CapZ_alpha_1"/>
</dbReference>
<dbReference type="InterPro" id="IPR017865">
    <property type="entry name" value="F-actin_cap_asu_CS"/>
</dbReference>
<dbReference type="PANTHER" id="PTHR10653">
    <property type="entry name" value="F-ACTIN-CAPPING PROTEIN SUBUNIT ALPHA"/>
    <property type="match status" value="1"/>
</dbReference>
<dbReference type="PANTHER" id="PTHR10653:SF0">
    <property type="entry name" value="F-ACTIN-CAPPING PROTEIN SUBUNIT ALPHA"/>
    <property type="match status" value="1"/>
</dbReference>
<dbReference type="Pfam" id="PF01267">
    <property type="entry name" value="F-actin_cap_A"/>
    <property type="match status" value="1"/>
</dbReference>
<dbReference type="PRINTS" id="PR00191">
    <property type="entry name" value="FACTINCAPA"/>
</dbReference>
<dbReference type="SUPFAM" id="SSF90096">
    <property type="entry name" value="Subunits of heterodimeric actin filament capping protein Capz"/>
    <property type="match status" value="1"/>
</dbReference>
<dbReference type="PROSITE" id="PS00748">
    <property type="entry name" value="F_ACTIN_CAPPING_A_1"/>
    <property type="match status" value="1"/>
</dbReference>
<dbReference type="PROSITE" id="PS00749">
    <property type="entry name" value="F_ACTIN_CAPPING_A_2"/>
    <property type="match status" value="1"/>
</dbReference>
<organism>
    <name type="scientific">Aspergillus oryzae (strain ATCC 42149 / RIB 40)</name>
    <name type="common">Yellow koji mold</name>
    <dbReference type="NCBI Taxonomy" id="510516"/>
    <lineage>
        <taxon>Eukaryota</taxon>
        <taxon>Fungi</taxon>
        <taxon>Dikarya</taxon>
        <taxon>Ascomycota</taxon>
        <taxon>Pezizomycotina</taxon>
        <taxon>Eurotiomycetes</taxon>
        <taxon>Eurotiomycetidae</taxon>
        <taxon>Eurotiales</taxon>
        <taxon>Aspergillaceae</taxon>
        <taxon>Aspergillus</taxon>
        <taxon>Aspergillus subgen. Circumdati</taxon>
    </lineage>
</organism>
<name>CAPZA_ASPOR</name>
<reference key="1">
    <citation type="journal article" date="2005" name="Nature">
        <title>Genome sequencing and analysis of Aspergillus oryzae.</title>
        <authorList>
            <person name="Machida M."/>
            <person name="Asai K."/>
            <person name="Sano M."/>
            <person name="Tanaka T."/>
            <person name="Kumagai T."/>
            <person name="Terai G."/>
            <person name="Kusumoto K."/>
            <person name="Arima T."/>
            <person name="Akita O."/>
            <person name="Kashiwagi Y."/>
            <person name="Abe K."/>
            <person name="Gomi K."/>
            <person name="Horiuchi H."/>
            <person name="Kitamoto K."/>
            <person name="Kobayashi T."/>
            <person name="Takeuchi M."/>
            <person name="Denning D.W."/>
            <person name="Galagan J.E."/>
            <person name="Nierman W.C."/>
            <person name="Yu J."/>
            <person name="Archer D.B."/>
            <person name="Bennett J.W."/>
            <person name="Bhatnagar D."/>
            <person name="Cleveland T.E."/>
            <person name="Fedorova N.D."/>
            <person name="Gotoh O."/>
            <person name="Horikawa H."/>
            <person name="Hosoyama A."/>
            <person name="Ichinomiya M."/>
            <person name="Igarashi R."/>
            <person name="Iwashita K."/>
            <person name="Juvvadi P.R."/>
            <person name="Kato M."/>
            <person name="Kato Y."/>
            <person name="Kin T."/>
            <person name="Kokubun A."/>
            <person name="Maeda H."/>
            <person name="Maeyama N."/>
            <person name="Maruyama J."/>
            <person name="Nagasaki H."/>
            <person name="Nakajima T."/>
            <person name="Oda K."/>
            <person name="Okada K."/>
            <person name="Paulsen I."/>
            <person name="Sakamoto K."/>
            <person name="Sawano T."/>
            <person name="Takahashi M."/>
            <person name="Takase K."/>
            <person name="Terabayashi Y."/>
            <person name="Wortman J.R."/>
            <person name="Yamada O."/>
            <person name="Yamagata Y."/>
            <person name="Anazawa H."/>
            <person name="Hata Y."/>
            <person name="Koide Y."/>
            <person name="Komori T."/>
            <person name="Koyama Y."/>
            <person name="Minetoki T."/>
            <person name="Suharnan S."/>
            <person name="Tanaka A."/>
            <person name="Isono K."/>
            <person name="Kuhara S."/>
            <person name="Ogasawara N."/>
            <person name="Kikuchi H."/>
        </authorList>
    </citation>
    <scope>NUCLEOTIDE SEQUENCE [LARGE SCALE GENOMIC DNA]</scope>
    <source>
        <strain>ATCC 42149 / RIB 40</strain>
    </source>
</reference>
<protein>
    <recommendedName>
        <fullName>F-actin-capping protein subunit alpha</fullName>
    </recommendedName>
</protein>
<gene>
    <name type="primary">cap1</name>
    <name type="ORF">AO090023000303</name>
</gene>
<comment type="function">
    <text evidence="1">F-actin-capping proteins bind in a Ca(2+)-independent manner to the fast growing ends of actin filaments (barbed end) thereby blocking the exchange of subunits at these ends. Unlike other capping proteins (such as gelsolin and severin), these proteins do not sever actin filaments (By similarity).</text>
</comment>
<comment type="subunit">
    <text evidence="2">Component of the F-actin capping complex, composed of a heterodimer of an alpha and a beta subunit.</text>
</comment>
<comment type="subcellular location">
    <subcellularLocation>
        <location evidence="3">Cytoplasm</location>
    </subcellularLocation>
    <subcellularLocation>
        <location evidence="3">Cytoplasm</location>
        <location evidence="3">Cytoskeleton</location>
        <location evidence="3">Actin patch</location>
    </subcellularLocation>
    <subcellularLocation>
        <location evidence="2">Cytoplasm</location>
        <location evidence="2">Cytoskeleton</location>
    </subcellularLocation>
    <text evidence="2">Localizes to the actomyosin contractile ring.</text>
</comment>
<comment type="similarity">
    <text evidence="4">Belongs to the F-actin-capping protein alpha subunit family.</text>
</comment>
<accession>Q2UHU9</accession>
<sequence length="273" mass="29976">MASTVDIASSFIEGAPPGELADVVADVKTLTSNGADIIPSLAPAFERYNETQLATVKLPGASQEVLISEYNKLDGNRYFDVESQTSFEVDHVTQEASAAQSYVLDSQNADLIKSLLKSLGAHAREHYPNCAYGVYPIENDSAVAILLVSNRYSPNNFWNGRFRATYQFPVSEPTTVTGKIQVDVHYYEDGNVALNTNKPLNLSVSSLSAESIISRIATAERDYQEDLNRAFVQMAEGAFKGLRRQLPITRQKVEWEKVGGYRLGQDISGGKGR</sequence>
<keyword id="KW-0117">Actin capping</keyword>
<keyword id="KW-0009">Actin-binding</keyword>
<keyword id="KW-0963">Cytoplasm</keyword>
<keyword id="KW-0206">Cytoskeleton</keyword>
<keyword id="KW-1185">Reference proteome</keyword>
<feature type="chain" id="PRO_0000255615" description="F-actin-capping protein subunit alpha">
    <location>
        <begin position="1"/>
        <end position="273"/>
    </location>
</feature>
<proteinExistence type="inferred from homology"/>